<feature type="chain" id="PRO_0000379461" description="5-hydroxymethyl-dUMP N-hydrolase">
    <location>
        <begin position="1"/>
        <end position="105"/>
    </location>
</feature>
<feature type="binding site" evidence="1">
    <location>
        <position position="6"/>
    </location>
    <ligand>
        <name>5-hydroxymethyl-dUMP</name>
        <dbReference type="ChEBI" id="CHEBI:90409"/>
        <note>ligand shared between homodimeric partners</note>
    </ligand>
</feature>
<feature type="binding site" evidence="1">
    <location>
        <position position="8"/>
    </location>
    <ligand>
        <name>5-hydroxymethyl-dUMP</name>
        <dbReference type="ChEBI" id="CHEBI:90409"/>
        <note>ligand shared between homodimeric partners</note>
    </ligand>
</feature>
<feature type="binding site" evidence="1">
    <location>
        <position position="42"/>
    </location>
    <ligand>
        <name>5-hydroxymethyl-dUMP</name>
        <dbReference type="ChEBI" id="CHEBI:90409"/>
        <note>ligand shared between homodimeric partners</note>
    </ligand>
</feature>
<feature type="binding site" evidence="1">
    <location>
        <position position="44"/>
    </location>
    <ligand>
        <name>5-hydroxymethyl-dUMP</name>
        <dbReference type="ChEBI" id="CHEBI:90409"/>
        <note>ligand shared between homodimeric partners</note>
    </ligand>
</feature>
<feature type="binding site" evidence="1">
    <location>
        <position position="48"/>
    </location>
    <ligand>
        <name>5-hydroxymethyl-dUMP</name>
        <dbReference type="ChEBI" id="CHEBI:90409"/>
        <note>ligand shared between homodimeric partners</note>
    </ligand>
</feature>
<feature type="binding site" description="in other chain" evidence="1">
    <location>
        <position position="72"/>
    </location>
    <ligand>
        <name>5-hydroxymethyl-dUMP</name>
        <dbReference type="ChEBI" id="CHEBI:90409"/>
        <note>ligand shared between homodimeric partners</note>
    </ligand>
</feature>
<name>DNPH1_BRAFL</name>
<proteinExistence type="inferred from homology"/>
<organism>
    <name type="scientific">Branchiostoma floridae</name>
    <name type="common">Florida lancelet</name>
    <name type="synonym">Amphioxus</name>
    <dbReference type="NCBI Taxonomy" id="7739"/>
    <lineage>
        <taxon>Eukaryota</taxon>
        <taxon>Metazoa</taxon>
        <taxon>Chordata</taxon>
        <taxon>Cephalochordata</taxon>
        <taxon>Leptocardii</taxon>
        <taxon>Amphioxiformes</taxon>
        <taxon>Branchiostomatidae</taxon>
        <taxon>Branchiostoma</taxon>
    </lineage>
</organism>
<dbReference type="EC" id="3.2.2.-" evidence="2"/>
<dbReference type="EMBL" id="ABEP02000838">
    <property type="status" value="NOT_ANNOTATED_CDS"/>
    <property type="molecule type" value="Genomic_DNA"/>
</dbReference>
<dbReference type="SMR" id="B6PLN3"/>
<dbReference type="STRING" id="7739.B6PLN3"/>
<dbReference type="InParanoid" id="B6PLN3"/>
<dbReference type="Proteomes" id="UP000001554">
    <property type="component" value="Unplaced"/>
</dbReference>
<dbReference type="GO" id="GO:0005737">
    <property type="term" value="C:cytoplasm"/>
    <property type="evidence" value="ECO:0000250"/>
    <property type="project" value="UniProtKB"/>
</dbReference>
<dbReference type="GO" id="GO:0005634">
    <property type="term" value="C:nucleus"/>
    <property type="evidence" value="ECO:0000250"/>
    <property type="project" value="UniProtKB"/>
</dbReference>
<dbReference type="GO" id="GO:0070694">
    <property type="term" value="F:5-hydroxymethyl-dUMP N-hydrolase activity"/>
    <property type="evidence" value="ECO:0000250"/>
    <property type="project" value="UniProtKB"/>
</dbReference>
<dbReference type="GO" id="GO:0009159">
    <property type="term" value="P:deoxyribonucleoside monophosphate catabolic process"/>
    <property type="evidence" value="ECO:0000250"/>
    <property type="project" value="UniProtKB"/>
</dbReference>
<dbReference type="GO" id="GO:0043174">
    <property type="term" value="P:nucleoside salvage"/>
    <property type="evidence" value="ECO:0000250"/>
    <property type="project" value="UniProtKB"/>
</dbReference>
<dbReference type="GO" id="GO:0009117">
    <property type="term" value="P:nucleotide metabolic process"/>
    <property type="evidence" value="ECO:0007669"/>
    <property type="project" value="UniProtKB-KW"/>
</dbReference>
<dbReference type="GO" id="GO:0030307">
    <property type="term" value="P:positive regulation of cell growth"/>
    <property type="evidence" value="ECO:0000250"/>
    <property type="project" value="UniProtKB"/>
</dbReference>
<dbReference type="Gene3D" id="3.40.50.450">
    <property type="match status" value="1"/>
</dbReference>
<dbReference type="HAMAP" id="MF_03036">
    <property type="entry name" value="Nuc_phosphate_hydrolase"/>
    <property type="match status" value="1"/>
</dbReference>
<dbReference type="InterPro" id="IPR051239">
    <property type="entry name" value="2'-dNMP_N-hydrolase"/>
</dbReference>
<dbReference type="InterPro" id="IPR028607">
    <property type="entry name" value="DNPH1"/>
</dbReference>
<dbReference type="InterPro" id="IPR007710">
    <property type="entry name" value="Nucleoside_deoxyribTrfase"/>
</dbReference>
<dbReference type="PANTHER" id="PTHR15364">
    <property type="entry name" value="2'-DEOXYNUCLEOSIDE 5'-PHOSPHATE N-HYDROLASE 1"/>
    <property type="match status" value="1"/>
</dbReference>
<dbReference type="PANTHER" id="PTHR15364:SF0">
    <property type="entry name" value="2'-DEOXYNUCLEOSIDE 5'-PHOSPHATE N-HYDROLASE 1"/>
    <property type="match status" value="1"/>
</dbReference>
<dbReference type="Pfam" id="PF05014">
    <property type="entry name" value="Nuc_deoxyrib_tr"/>
    <property type="match status" value="1"/>
</dbReference>
<dbReference type="SUPFAM" id="SSF52309">
    <property type="entry name" value="N-(deoxy)ribosyltransferase-like"/>
    <property type="match status" value="1"/>
</dbReference>
<reference key="1">
    <citation type="journal article" date="2008" name="Nature">
        <title>The amphioxus genome and the evolution of the chordate karyotype.</title>
        <authorList>
            <person name="Putnam N.H."/>
            <person name="Butts T."/>
            <person name="Ferrier D.E.K."/>
            <person name="Furlong R.F."/>
            <person name="Hellsten U."/>
            <person name="Kawashima T."/>
            <person name="Robinson-Rechavi M."/>
            <person name="Shoguchi E."/>
            <person name="Terry A."/>
            <person name="Yu J.-K."/>
            <person name="Benito-Gutierrez E.L."/>
            <person name="Dubchak I."/>
            <person name="Garcia-Fernandez J."/>
            <person name="Gibson-Brown J.J."/>
            <person name="Grigoriev I.V."/>
            <person name="Horton A.C."/>
            <person name="de Jong P.J."/>
            <person name="Jurka J."/>
            <person name="Kapitonov V.V."/>
            <person name="Kohara Y."/>
            <person name="Kuroki Y."/>
            <person name="Lindquist E."/>
            <person name="Lucas S."/>
            <person name="Osoegawa K."/>
            <person name="Pennacchio L.A."/>
            <person name="Salamov A.A."/>
            <person name="Satou Y."/>
            <person name="Sauka-Spengler T."/>
            <person name="Schmutz J."/>
            <person name="Shin-I T."/>
            <person name="Toyoda A."/>
            <person name="Bronner-Fraser M."/>
            <person name="Fujiyama A."/>
            <person name="Holland L.Z."/>
            <person name="Holland P.W.H."/>
            <person name="Satoh N."/>
            <person name="Rokhsar D.S."/>
        </authorList>
    </citation>
    <scope>NUCLEOTIDE SEQUENCE [LARGE SCALE GENOMIC DNA]</scope>
    <source>
        <strain>S238N-H82</strain>
        <tissue>Testis</tissue>
    </source>
</reference>
<evidence type="ECO:0000250" key="1">
    <source>
        <dbReference type="UniProtKB" id="O35820"/>
    </source>
</evidence>
<evidence type="ECO:0000250" key="2">
    <source>
        <dbReference type="UniProtKB" id="O43598"/>
    </source>
</evidence>
<evidence type="ECO:0000255" key="3">
    <source>
        <dbReference type="HAMAP-Rule" id="MF_03036"/>
    </source>
</evidence>
<accession>B6PLN3</accession>
<gene>
    <name type="ORF">BRAFLDRAFT_288561</name>
</gene>
<keyword id="KW-0963">Cytoplasm</keyword>
<keyword id="KW-0326">Glycosidase</keyword>
<keyword id="KW-0378">Hydrolase</keyword>
<keyword id="KW-0546">Nucleotide metabolism</keyword>
<keyword id="KW-0539">Nucleus</keyword>
<keyword id="KW-1185">Reference proteome</keyword>
<protein>
    <recommendedName>
        <fullName evidence="2">5-hydroxymethyl-dUMP N-hydrolase</fullName>
        <ecNumber evidence="2">3.2.2.-</ecNumber>
    </recommendedName>
    <alternativeName>
        <fullName evidence="2">2'-deoxynucleoside 5'-phosphate N-hydrolase 1</fullName>
    </alternativeName>
</protein>
<sequence>MIHFKGLIFYHYSAGDDVAIHTQDMAWLEESDVVVAEVTQPSLGVGYEIGRAVAWKKRILCLYRPDDGKGLSAMVRGAHDGKNFIVKDYQEPEVPGILKEFLSSS</sequence>
<comment type="function">
    <text evidence="2">Part of a nucleotide salvage pathway that eliminates epigenetically modified 5-hydroxymethyl-dCMP (hmdCMP) in a two-step process entailing deamination to cytotoxic 5-hydroxymethyl-dUMP (hmdUMP), followed by its hydrolysis into 5-hydroxymethyluracil (hmU) and 2-deoxy-D-ribose 5-phosphate (deoxyribosephosphate). Catalyzes the second step in that pathway, the hydrolysis of the N-glycosidic bond in hmdUMP, degrading this cytotoxic nucleotide to avoid its genomic integration.</text>
</comment>
<comment type="catalytic activity">
    <reaction evidence="2">
        <text>5-hydroxymethyl-dUMP + H2O = 5-hydroxymethyluracil + 2-deoxy-D-ribose 5-phosphate</text>
        <dbReference type="Rhea" id="RHEA:77099"/>
        <dbReference type="ChEBI" id="CHEBI:15377"/>
        <dbReference type="ChEBI" id="CHEBI:16964"/>
        <dbReference type="ChEBI" id="CHEBI:62877"/>
        <dbReference type="ChEBI" id="CHEBI:90409"/>
    </reaction>
    <physiologicalReaction direction="left-to-right" evidence="2">
        <dbReference type="Rhea" id="RHEA:77100"/>
    </physiologicalReaction>
</comment>
<comment type="subunit">
    <text evidence="2">Monomer and homodimer.</text>
</comment>
<comment type="subcellular location">
    <subcellularLocation>
        <location evidence="2">Cytoplasm</location>
    </subcellularLocation>
    <subcellularLocation>
        <location evidence="2">Nucleus</location>
    </subcellularLocation>
</comment>
<comment type="similarity">
    <text evidence="3">Belongs to the 2'-deoxynucleoside 5'-phosphate N-hydrolase 1 family.</text>
</comment>